<comment type="function">
    <text evidence="1">Bidirectionally degrades single-stranded DNA into large acid-insoluble oligonucleotides, which are then degraded further into small acid-soluble oligonucleotides.</text>
</comment>
<comment type="catalytic activity">
    <reaction evidence="1">
        <text>Exonucleolytic cleavage in either 5'- to 3'- or 3'- to 5'-direction to yield nucleoside 5'-phosphates.</text>
        <dbReference type="EC" id="3.1.11.6"/>
    </reaction>
</comment>
<comment type="subunit">
    <text evidence="1">Heterooligomer composed of large and small subunits.</text>
</comment>
<comment type="subcellular location">
    <subcellularLocation>
        <location evidence="1">Cytoplasm</location>
    </subcellularLocation>
</comment>
<comment type="similarity">
    <text evidence="1">Belongs to the XseB family.</text>
</comment>
<accession>C1CR92</accession>
<organism>
    <name type="scientific">Streptococcus pneumoniae (strain Taiwan19F-14)</name>
    <dbReference type="NCBI Taxonomy" id="487213"/>
    <lineage>
        <taxon>Bacteria</taxon>
        <taxon>Bacillati</taxon>
        <taxon>Bacillota</taxon>
        <taxon>Bacilli</taxon>
        <taxon>Lactobacillales</taxon>
        <taxon>Streptococcaceae</taxon>
        <taxon>Streptococcus</taxon>
    </lineage>
</organism>
<proteinExistence type="inferred from homology"/>
<sequence>MSKQKKFEENLAELETIVQSLENGEIALEDAITAFQKGMVLSKELQATLDKAEKTLVKVMQEDGTESDFE</sequence>
<feature type="chain" id="PRO_1000200265" description="Exodeoxyribonuclease 7 small subunit">
    <location>
        <begin position="1"/>
        <end position="70"/>
    </location>
</feature>
<reference key="1">
    <citation type="journal article" date="2010" name="Genome Biol.">
        <title>Structure and dynamics of the pan-genome of Streptococcus pneumoniae and closely related species.</title>
        <authorList>
            <person name="Donati C."/>
            <person name="Hiller N.L."/>
            <person name="Tettelin H."/>
            <person name="Muzzi A."/>
            <person name="Croucher N.J."/>
            <person name="Angiuoli S.V."/>
            <person name="Oggioni M."/>
            <person name="Dunning Hotopp J.C."/>
            <person name="Hu F.Z."/>
            <person name="Riley D.R."/>
            <person name="Covacci A."/>
            <person name="Mitchell T.J."/>
            <person name="Bentley S.D."/>
            <person name="Kilian M."/>
            <person name="Ehrlich G.D."/>
            <person name="Rappuoli R."/>
            <person name="Moxon E.R."/>
            <person name="Masignani V."/>
        </authorList>
    </citation>
    <scope>NUCLEOTIDE SEQUENCE [LARGE SCALE GENOMIC DNA]</scope>
    <source>
        <strain>Taiwan19F-14</strain>
    </source>
</reference>
<name>EX7S_STRZT</name>
<dbReference type="EC" id="3.1.11.6" evidence="1"/>
<dbReference type="EMBL" id="CP000921">
    <property type="protein sequence ID" value="ACO22676.1"/>
    <property type="molecule type" value="Genomic_DNA"/>
</dbReference>
<dbReference type="RefSeq" id="WP_000043230.1">
    <property type="nucleotide sequence ID" value="NC_012469.1"/>
</dbReference>
<dbReference type="SMR" id="C1CR92"/>
<dbReference type="KEGG" id="snt:SPT_1020"/>
<dbReference type="HOGENOM" id="CLU_145918_3_2_9"/>
<dbReference type="GO" id="GO:0005829">
    <property type="term" value="C:cytosol"/>
    <property type="evidence" value="ECO:0007669"/>
    <property type="project" value="TreeGrafter"/>
</dbReference>
<dbReference type="GO" id="GO:0009318">
    <property type="term" value="C:exodeoxyribonuclease VII complex"/>
    <property type="evidence" value="ECO:0007669"/>
    <property type="project" value="InterPro"/>
</dbReference>
<dbReference type="GO" id="GO:0008855">
    <property type="term" value="F:exodeoxyribonuclease VII activity"/>
    <property type="evidence" value="ECO:0007669"/>
    <property type="project" value="UniProtKB-UniRule"/>
</dbReference>
<dbReference type="GO" id="GO:0006308">
    <property type="term" value="P:DNA catabolic process"/>
    <property type="evidence" value="ECO:0007669"/>
    <property type="project" value="UniProtKB-UniRule"/>
</dbReference>
<dbReference type="FunFam" id="1.10.287.1040:FF:000003">
    <property type="entry name" value="Exodeoxyribonuclease 7 small subunit"/>
    <property type="match status" value="1"/>
</dbReference>
<dbReference type="Gene3D" id="1.10.287.1040">
    <property type="entry name" value="Exonuclease VII, small subunit"/>
    <property type="match status" value="1"/>
</dbReference>
<dbReference type="HAMAP" id="MF_00337">
    <property type="entry name" value="Exonuc_7_S"/>
    <property type="match status" value="1"/>
</dbReference>
<dbReference type="InterPro" id="IPR003761">
    <property type="entry name" value="Exonuc_VII_S"/>
</dbReference>
<dbReference type="InterPro" id="IPR037004">
    <property type="entry name" value="Exonuc_VII_ssu_sf"/>
</dbReference>
<dbReference type="NCBIfam" id="NF002138">
    <property type="entry name" value="PRK00977.1-2"/>
    <property type="match status" value="1"/>
</dbReference>
<dbReference type="NCBIfam" id="TIGR01280">
    <property type="entry name" value="xseB"/>
    <property type="match status" value="1"/>
</dbReference>
<dbReference type="PANTHER" id="PTHR34137">
    <property type="entry name" value="EXODEOXYRIBONUCLEASE 7 SMALL SUBUNIT"/>
    <property type="match status" value="1"/>
</dbReference>
<dbReference type="PANTHER" id="PTHR34137:SF1">
    <property type="entry name" value="EXODEOXYRIBONUCLEASE 7 SMALL SUBUNIT"/>
    <property type="match status" value="1"/>
</dbReference>
<dbReference type="Pfam" id="PF02609">
    <property type="entry name" value="Exonuc_VII_S"/>
    <property type="match status" value="1"/>
</dbReference>
<dbReference type="PIRSF" id="PIRSF006488">
    <property type="entry name" value="Exonuc_VII_S"/>
    <property type="match status" value="1"/>
</dbReference>
<dbReference type="SUPFAM" id="SSF116842">
    <property type="entry name" value="XseB-like"/>
    <property type="match status" value="1"/>
</dbReference>
<gene>
    <name evidence="1" type="primary">xseB</name>
    <name type="ordered locus">SPT_1020</name>
</gene>
<keyword id="KW-0963">Cytoplasm</keyword>
<keyword id="KW-0269">Exonuclease</keyword>
<keyword id="KW-0378">Hydrolase</keyword>
<keyword id="KW-0540">Nuclease</keyword>
<protein>
    <recommendedName>
        <fullName evidence="1">Exodeoxyribonuclease 7 small subunit</fullName>
        <ecNumber evidence="1">3.1.11.6</ecNumber>
    </recommendedName>
    <alternativeName>
        <fullName evidence="1">Exodeoxyribonuclease VII small subunit</fullName>
        <shortName evidence="1">Exonuclease VII small subunit</shortName>
    </alternativeName>
</protein>
<evidence type="ECO:0000255" key="1">
    <source>
        <dbReference type="HAMAP-Rule" id="MF_00337"/>
    </source>
</evidence>